<accession>P31268</accession>
<accession>A4D191</accession>
<accession>O43368</accession>
<accession>O43486</accession>
<accession>O95655</accession>
<accession>Q9NSC8</accession>
<accession>Q9UDM1</accession>
<comment type="function">
    <text>Sequence-specific transcription factor which is part of a developmental regulatory system that provides cells with specific positional identities on the anterior-posterior axis.</text>
</comment>
<comment type="interaction">
    <interactant intactId="EBI-3910421">
        <id>P31268</id>
    </interactant>
    <interactant intactId="EBI-727004">
        <id>O00560</id>
        <label>SDCBP</label>
    </interactant>
    <organismsDiffer>false</organismsDiffer>
    <experiments>3</experiments>
</comment>
<comment type="subcellular location">
    <subcellularLocation>
        <location>Nucleus</location>
    </subcellularLocation>
</comment>
<comment type="similarity">
    <text evidence="8">Belongs to the Antp homeobox family.</text>
</comment>
<dbReference type="EMBL" id="AF026397">
    <property type="protein sequence ID" value="AAB94604.1"/>
    <property type="molecule type" value="mRNA"/>
</dbReference>
<dbReference type="EMBL" id="AJ005814">
    <property type="protein sequence ID" value="CAA06713.1"/>
    <property type="molecule type" value="mRNA"/>
</dbReference>
<dbReference type="EMBL" id="AF032095">
    <property type="protein sequence ID" value="AAD01939.2"/>
    <property type="molecule type" value="Genomic_DNA"/>
</dbReference>
<dbReference type="EMBL" id="X84803">
    <property type="protein sequence ID" value="CAA59270.1"/>
    <property type="molecule type" value="Genomic_DNA"/>
</dbReference>
<dbReference type="EMBL" id="X84804">
    <property type="protein sequence ID" value="CAA59270.1"/>
    <property type="status" value="JOINED"/>
    <property type="molecule type" value="Genomic_DNA"/>
</dbReference>
<dbReference type="EMBL" id="CH236948">
    <property type="protein sequence ID" value="EAL24221.1"/>
    <property type="molecule type" value="Genomic_DNA"/>
</dbReference>
<dbReference type="EMBL" id="AC004080">
    <property type="status" value="NOT_ANNOTATED_CDS"/>
    <property type="molecule type" value="Genomic_DNA"/>
</dbReference>
<dbReference type="EMBL" id="CH471073">
    <property type="protein sequence ID" value="EAW93877.1"/>
    <property type="molecule type" value="Genomic_DNA"/>
</dbReference>
<dbReference type="EMBL" id="U92543">
    <property type="protein sequence ID" value="AAD00727.1"/>
    <property type="molecule type" value="Genomic_DNA"/>
</dbReference>
<dbReference type="CCDS" id="CCDS5408.1"/>
<dbReference type="PIR" id="S15536">
    <property type="entry name" value="S15536"/>
</dbReference>
<dbReference type="RefSeq" id="NP_008827.2">
    <property type="nucleotide sequence ID" value="NM_006896.3"/>
</dbReference>
<dbReference type="RefSeq" id="XP_054214043.1">
    <property type="nucleotide sequence ID" value="XM_054358068.1"/>
</dbReference>
<dbReference type="RefSeq" id="XP_054214044.1">
    <property type="nucleotide sequence ID" value="XM_054358069.1"/>
</dbReference>
<dbReference type="RefSeq" id="XP_054214045.1">
    <property type="nucleotide sequence ID" value="XM_054358070.1"/>
</dbReference>
<dbReference type="RefSeq" id="XP_054214046.1">
    <property type="nucleotide sequence ID" value="XM_054358071.1"/>
</dbReference>
<dbReference type="SMR" id="P31268"/>
<dbReference type="BioGRID" id="109444">
    <property type="interactions" value="90"/>
</dbReference>
<dbReference type="FunCoup" id="P31268">
    <property type="interactions" value="1142"/>
</dbReference>
<dbReference type="IntAct" id="P31268">
    <property type="interactions" value="19"/>
</dbReference>
<dbReference type="STRING" id="9606.ENSP00000242159"/>
<dbReference type="GlyGen" id="P31268">
    <property type="glycosylation" value="1 site"/>
</dbReference>
<dbReference type="iPTMnet" id="P31268"/>
<dbReference type="PhosphoSitePlus" id="P31268"/>
<dbReference type="BioMuta" id="HOXA7"/>
<dbReference type="DMDM" id="311033439"/>
<dbReference type="jPOST" id="P31268"/>
<dbReference type="MassIVE" id="P31268"/>
<dbReference type="PaxDb" id="9606-ENSP00000242159"/>
<dbReference type="PeptideAtlas" id="P31268"/>
<dbReference type="ProteomicsDB" id="54769"/>
<dbReference type="Antibodypedia" id="12389">
    <property type="antibodies" value="175 antibodies from 27 providers"/>
</dbReference>
<dbReference type="DNASU" id="3204"/>
<dbReference type="Ensembl" id="ENST00000242159.5">
    <property type="protein sequence ID" value="ENSP00000242159.3"/>
    <property type="gene ID" value="ENSG00000122592.8"/>
</dbReference>
<dbReference type="GeneID" id="3204"/>
<dbReference type="KEGG" id="hsa:3204"/>
<dbReference type="MANE-Select" id="ENST00000242159.5">
    <property type="protein sequence ID" value="ENSP00000242159.3"/>
    <property type="RefSeq nucleotide sequence ID" value="NM_006896.4"/>
    <property type="RefSeq protein sequence ID" value="NP_008827.2"/>
</dbReference>
<dbReference type="UCSC" id="uc003sys.4">
    <property type="organism name" value="human"/>
</dbReference>
<dbReference type="AGR" id="HGNC:5108"/>
<dbReference type="CTD" id="3204"/>
<dbReference type="DisGeNET" id="3204"/>
<dbReference type="GeneCards" id="HOXA7"/>
<dbReference type="HGNC" id="HGNC:5108">
    <property type="gene designation" value="HOXA7"/>
</dbReference>
<dbReference type="HPA" id="ENSG00000122592">
    <property type="expression patterns" value="Low tissue specificity"/>
</dbReference>
<dbReference type="MIM" id="142950">
    <property type="type" value="gene"/>
</dbReference>
<dbReference type="neXtProt" id="NX_P31268"/>
<dbReference type="OpenTargets" id="ENSG00000122592"/>
<dbReference type="PharmGKB" id="PA29385"/>
<dbReference type="VEuPathDB" id="HostDB:ENSG00000122592"/>
<dbReference type="eggNOG" id="KOG0489">
    <property type="taxonomic scope" value="Eukaryota"/>
</dbReference>
<dbReference type="GeneTree" id="ENSGT00940000161013"/>
<dbReference type="HOGENOM" id="CLU_061398_1_1_1"/>
<dbReference type="InParanoid" id="P31268"/>
<dbReference type="OMA" id="YRMYPWM"/>
<dbReference type="OrthoDB" id="6159439at2759"/>
<dbReference type="PAN-GO" id="P31268">
    <property type="GO annotations" value="5 GO annotations based on evolutionary models"/>
</dbReference>
<dbReference type="PhylomeDB" id="P31268"/>
<dbReference type="TreeFam" id="TF316310"/>
<dbReference type="PathwayCommons" id="P31268"/>
<dbReference type="SignaLink" id="P31268"/>
<dbReference type="SIGNOR" id="P31268"/>
<dbReference type="BioGRID-ORCS" id="3204">
    <property type="hits" value="18 hits in 1170 CRISPR screens"/>
</dbReference>
<dbReference type="GeneWiki" id="HOXA7"/>
<dbReference type="GenomeRNAi" id="3204"/>
<dbReference type="Pharos" id="P31268">
    <property type="development level" value="Tbio"/>
</dbReference>
<dbReference type="PRO" id="PR:P31268"/>
<dbReference type="Proteomes" id="UP000005640">
    <property type="component" value="Chromosome 7"/>
</dbReference>
<dbReference type="RNAct" id="P31268">
    <property type="molecule type" value="protein"/>
</dbReference>
<dbReference type="Bgee" id="ENSG00000122592">
    <property type="expression patterns" value="Expressed in oocyte and 136 other cell types or tissues"/>
</dbReference>
<dbReference type="ExpressionAtlas" id="P31268">
    <property type="expression patterns" value="baseline and differential"/>
</dbReference>
<dbReference type="GO" id="GO:0000785">
    <property type="term" value="C:chromatin"/>
    <property type="evidence" value="ECO:0000247"/>
    <property type="project" value="NTNU_SB"/>
</dbReference>
<dbReference type="GO" id="GO:0031965">
    <property type="term" value="C:nuclear membrane"/>
    <property type="evidence" value="ECO:0000314"/>
    <property type="project" value="HPA"/>
</dbReference>
<dbReference type="GO" id="GO:0005654">
    <property type="term" value="C:nucleoplasm"/>
    <property type="evidence" value="ECO:0000314"/>
    <property type="project" value="HPA"/>
</dbReference>
<dbReference type="GO" id="GO:0005634">
    <property type="term" value="C:nucleus"/>
    <property type="evidence" value="ECO:0000318"/>
    <property type="project" value="GO_Central"/>
</dbReference>
<dbReference type="GO" id="GO:0001228">
    <property type="term" value="F:DNA-binding transcription activator activity, RNA polymerase II-specific"/>
    <property type="evidence" value="ECO:0000314"/>
    <property type="project" value="NTNU_SB"/>
</dbReference>
<dbReference type="GO" id="GO:0000981">
    <property type="term" value="F:DNA-binding transcription factor activity, RNA polymerase II-specific"/>
    <property type="evidence" value="ECO:0000247"/>
    <property type="project" value="NTNU_SB"/>
</dbReference>
<dbReference type="GO" id="GO:0140297">
    <property type="term" value="F:DNA-binding transcription factor binding"/>
    <property type="evidence" value="ECO:0000353"/>
    <property type="project" value="UniProtKB"/>
</dbReference>
<dbReference type="GO" id="GO:0000978">
    <property type="term" value="F:RNA polymerase II cis-regulatory region sequence-specific DNA binding"/>
    <property type="evidence" value="ECO:0000314"/>
    <property type="project" value="NTNU_SB"/>
</dbReference>
<dbReference type="GO" id="GO:0043565">
    <property type="term" value="F:sequence-specific DNA binding"/>
    <property type="evidence" value="ECO:0000314"/>
    <property type="project" value="UniProtKB"/>
</dbReference>
<dbReference type="GO" id="GO:1990837">
    <property type="term" value="F:sequence-specific double-stranded DNA binding"/>
    <property type="evidence" value="ECO:0000314"/>
    <property type="project" value="ARUK-UCL"/>
</dbReference>
<dbReference type="GO" id="GO:0001525">
    <property type="term" value="P:angiogenesis"/>
    <property type="evidence" value="ECO:0000270"/>
    <property type="project" value="UniProtKB"/>
</dbReference>
<dbReference type="GO" id="GO:0009952">
    <property type="term" value="P:anterior/posterior pattern specification"/>
    <property type="evidence" value="ECO:0000318"/>
    <property type="project" value="GO_Central"/>
</dbReference>
<dbReference type="GO" id="GO:0048704">
    <property type="term" value="P:embryonic skeletal system morphogenesis"/>
    <property type="evidence" value="ECO:0007669"/>
    <property type="project" value="Ensembl"/>
</dbReference>
<dbReference type="GO" id="GO:0001953">
    <property type="term" value="P:negative regulation of cell-matrix adhesion"/>
    <property type="evidence" value="ECO:0000314"/>
    <property type="project" value="UniProtKB"/>
</dbReference>
<dbReference type="GO" id="GO:0045892">
    <property type="term" value="P:negative regulation of DNA-templated transcription"/>
    <property type="evidence" value="ECO:0000314"/>
    <property type="project" value="UniProtKB"/>
</dbReference>
<dbReference type="GO" id="GO:0045617">
    <property type="term" value="P:negative regulation of keratinocyte differentiation"/>
    <property type="evidence" value="ECO:0000314"/>
    <property type="project" value="MGI"/>
</dbReference>
<dbReference type="GO" id="GO:0002686">
    <property type="term" value="P:negative regulation of leukocyte migration"/>
    <property type="evidence" value="ECO:0000314"/>
    <property type="project" value="UniProtKB"/>
</dbReference>
<dbReference type="GO" id="GO:0045656">
    <property type="term" value="P:negative regulation of monocyte differentiation"/>
    <property type="evidence" value="ECO:0000314"/>
    <property type="project" value="UniProtKB"/>
</dbReference>
<dbReference type="GO" id="GO:0000122">
    <property type="term" value="P:negative regulation of transcription by RNA polymerase II"/>
    <property type="evidence" value="ECO:0000314"/>
    <property type="project" value="UniProtKB"/>
</dbReference>
<dbReference type="GO" id="GO:0045944">
    <property type="term" value="P:positive regulation of transcription by RNA polymerase II"/>
    <property type="evidence" value="ECO:0000314"/>
    <property type="project" value="NTNU_SB"/>
</dbReference>
<dbReference type="GO" id="GO:0006357">
    <property type="term" value="P:regulation of transcription by RNA polymerase II"/>
    <property type="evidence" value="ECO:0000318"/>
    <property type="project" value="GO_Central"/>
</dbReference>
<dbReference type="GO" id="GO:0048863">
    <property type="term" value="P:stem cell differentiation"/>
    <property type="evidence" value="ECO:0007669"/>
    <property type="project" value="Ensembl"/>
</dbReference>
<dbReference type="CDD" id="cd00086">
    <property type="entry name" value="homeodomain"/>
    <property type="match status" value="1"/>
</dbReference>
<dbReference type="FunFam" id="1.10.10.60:FF:000017">
    <property type="entry name" value="Homeobox protein antennapedia"/>
    <property type="match status" value="1"/>
</dbReference>
<dbReference type="Gene3D" id="1.10.10.60">
    <property type="entry name" value="Homeodomain-like"/>
    <property type="match status" value="1"/>
</dbReference>
<dbReference type="InterPro" id="IPR050296">
    <property type="entry name" value="Antp_homeobox"/>
</dbReference>
<dbReference type="InterPro" id="IPR001356">
    <property type="entry name" value="HD"/>
</dbReference>
<dbReference type="InterPro" id="IPR020479">
    <property type="entry name" value="HD_metazoa"/>
</dbReference>
<dbReference type="InterPro" id="IPR017995">
    <property type="entry name" value="Homeobox_antennapedia"/>
</dbReference>
<dbReference type="InterPro" id="IPR001827">
    <property type="entry name" value="Homeobox_Antennapedia_CS"/>
</dbReference>
<dbReference type="InterPro" id="IPR017970">
    <property type="entry name" value="Homeobox_CS"/>
</dbReference>
<dbReference type="InterPro" id="IPR009057">
    <property type="entry name" value="Homeodomain-like_sf"/>
</dbReference>
<dbReference type="PANTHER" id="PTHR45659">
    <property type="entry name" value="HOMEOBOX PROTEIN HOX"/>
    <property type="match status" value="1"/>
</dbReference>
<dbReference type="PANTHER" id="PTHR45659:SF12">
    <property type="entry name" value="HOMEOBOX PROTEIN HOX-A7"/>
    <property type="match status" value="1"/>
</dbReference>
<dbReference type="Pfam" id="PF00046">
    <property type="entry name" value="Homeodomain"/>
    <property type="match status" value="1"/>
</dbReference>
<dbReference type="PRINTS" id="PR00025">
    <property type="entry name" value="ANTENNAPEDIA"/>
</dbReference>
<dbReference type="PRINTS" id="PR00024">
    <property type="entry name" value="HOMEOBOX"/>
</dbReference>
<dbReference type="SMART" id="SM00389">
    <property type="entry name" value="HOX"/>
    <property type="match status" value="1"/>
</dbReference>
<dbReference type="SUPFAM" id="SSF46689">
    <property type="entry name" value="Homeodomain-like"/>
    <property type="match status" value="1"/>
</dbReference>
<dbReference type="PROSITE" id="PS00032">
    <property type="entry name" value="ANTENNAPEDIA"/>
    <property type="match status" value="1"/>
</dbReference>
<dbReference type="PROSITE" id="PS00027">
    <property type="entry name" value="HOMEOBOX_1"/>
    <property type="match status" value="1"/>
</dbReference>
<dbReference type="PROSITE" id="PS50071">
    <property type="entry name" value="HOMEOBOX_2"/>
    <property type="match status" value="1"/>
</dbReference>
<name>HXA7_HUMAN</name>
<gene>
    <name type="primary">HOXA7</name>
    <name type="synonym">HOX1A</name>
</gene>
<reference key="1">
    <citation type="journal article" date="2001" name="J. Biol. Chem.">
        <title>Human homeobox HOXA7 regulates keratinocyte transglutaminase type 1 and inhibits differentiation.</title>
        <authorList>
            <person name="La Celle P.T."/>
            <person name="Polakowska R.R."/>
        </authorList>
    </citation>
    <scope>NUCLEOTIDE SEQUENCE [MRNA]</scope>
    <scope>VARIANT THR-18</scope>
</reference>
<reference key="2">
    <citation type="journal article" date="1998" name="Biochim. Biophys. Acta">
        <title>Sequence characterisation and expression of homeobox HOX A7 in the multi-potential erythroleukaemic cell line TF-1.</title>
        <authorList>
            <person name="McIlhatton M.A."/>
            <person name="Bremner P.S."/>
            <person name="McMullin M.F."/>
            <person name="Maxwell A.P."/>
            <person name="Winter P.C."/>
            <person name="Lappin T.R."/>
        </authorList>
    </citation>
    <scope>NUCLEOTIDE SEQUENCE [MRNA]</scope>
    <scope>VARIANT THR-18</scope>
</reference>
<reference key="3">
    <citation type="journal article" date="2000" name="Mol. Biotechnol.">
        <title>Sequence analysis and tissue specific expression of human HOXA7.</title>
        <authorList>
            <person name="Kim M.H."/>
            <person name="Jin H."/>
            <person name="Seol E.Y."/>
            <person name="Yoo M."/>
            <person name="Park H.W."/>
        </authorList>
    </citation>
    <scope>NUCLEOTIDE SEQUENCE [GENOMIC DNA]</scope>
    <scope>VARIANT THR-18</scope>
</reference>
<reference key="4">
    <citation type="submission" date="1995-02" db="EMBL/GenBank/DDBJ databases">
        <authorList>
            <person name="Albrechtsen R."/>
            <person name="Wewer U."/>
        </authorList>
    </citation>
    <scope>NUCLEOTIDE SEQUENCE [GENOMIC DNA]</scope>
    <scope>VARIANT THR-18</scope>
    <source>
        <tissue>Placenta</tissue>
    </source>
</reference>
<reference key="5">
    <citation type="journal article" date="2003" name="Science">
        <title>Human chromosome 7: DNA sequence and biology.</title>
        <authorList>
            <person name="Scherer S.W."/>
            <person name="Cheung J."/>
            <person name="MacDonald J.R."/>
            <person name="Osborne L.R."/>
            <person name="Nakabayashi K."/>
            <person name="Herbrick J.-A."/>
            <person name="Carson A.R."/>
            <person name="Parker-Katiraee L."/>
            <person name="Skaug J."/>
            <person name="Khaja R."/>
            <person name="Zhang J."/>
            <person name="Hudek A.K."/>
            <person name="Li M."/>
            <person name="Haddad M."/>
            <person name="Duggan G.E."/>
            <person name="Fernandez B.A."/>
            <person name="Kanematsu E."/>
            <person name="Gentles S."/>
            <person name="Christopoulos C.C."/>
            <person name="Choufani S."/>
            <person name="Kwasnicka D."/>
            <person name="Zheng X.H."/>
            <person name="Lai Z."/>
            <person name="Nusskern D.R."/>
            <person name="Zhang Q."/>
            <person name="Gu Z."/>
            <person name="Lu F."/>
            <person name="Zeesman S."/>
            <person name="Nowaczyk M.J."/>
            <person name="Teshima I."/>
            <person name="Chitayat D."/>
            <person name="Shuman C."/>
            <person name="Weksberg R."/>
            <person name="Zackai E.H."/>
            <person name="Grebe T.A."/>
            <person name="Cox S.R."/>
            <person name="Kirkpatrick S.J."/>
            <person name="Rahman N."/>
            <person name="Friedman J.M."/>
            <person name="Heng H.H.Q."/>
            <person name="Pelicci P.G."/>
            <person name="Lo-Coco F."/>
            <person name="Belloni E."/>
            <person name="Shaffer L.G."/>
            <person name="Pober B."/>
            <person name="Morton C.C."/>
            <person name="Gusella J.F."/>
            <person name="Bruns G.A.P."/>
            <person name="Korf B.R."/>
            <person name="Quade B.J."/>
            <person name="Ligon A.H."/>
            <person name="Ferguson H."/>
            <person name="Higgins A.W."/>
            <person name="Leach N.T."/>
            <person name="Herrick S.R."/>
            <person name="Lemyre E."/>
            <person name="Farra C.G."/>
            <person name="Kim H.-G."/>
            <person name="Summers A.M."/>
            <person name="Gripp K.W."/>
            <person name="Roberts W."/>
            <person name="Szatmari P."/>
            <person name="Winsor E.J.T."/>
            <person name="Grzeschik K.-H."/>
            <person name="Teebi A."/>
            <person name="Minassian B.A."/>
            <person name="Kere J."/>
            <person name="Armengol L."/>
            <person name="Pujana M.A."/>
            <person name="Estivill X."/>
            <person name="Wilson M.D."/>
            <person name="Koop B.F."/>
            <person name="Tosi S."/>
            <person name="Moore G.E."/>
            <person name="Boright A.P."/>
            <person name="Zlotorynski E."/>
            <person name="Kerem B."/>
            <person name="Kroisel P.M."/>
            <person name="Petek E."/>
            <person name="Oscier D.G."/>
            <person name="Mould S.J."/>
            <person name="Doehner H."/>
            <person name="Doehner K."/>
            <person name="Rommens J.M."/>
            <person name="Vincent J.B."/>
            <person name="Venter J.C."/>
            <person name="Li P.W."/>
            <person name="Mural R.J."/>
            <person name="Adams M.D."/>
            <person name="Tsui L.-C."/>
        </authorList>
    </citation>
    <scope>NUCLEOTIDE SEQUENCE [LARGE SCALE GENOMIC DNA]</scope>
</reference>
<reference key="6">
    <citation type="journal article" date="2003" name="Nature">
        <title>The DNA sequence of human chromosome 7.</title>
        <authorList>
            <person name="Hillier L.W."/>
            <person name="Fulton R.S."/>
            <person name="Fulton L.A."/>
            <person name="Graves T.A."/>
            <person name="Pepin K.H."/>
            <person name="Wagner-McPherson C."/>
            <person name="Layman D."/>
            <person name="Maas J."/>
            <person name="Jaeger S."/>
            <person name="Walker R."/>
            <person name="Wylie K."/>
            <person name="Sekhon M."/>
            <person name="Becker M.C."/>
            <person name="O'Laughlin M.D."/>
            <person name="Schaller M.E."/>
            <person name="Fewell G.A."/>
            <person name="Delehaunty K.D."/>
            <person name="Miner T.L."/>
            <person name="Nash W.E."/>
            <person name="Cordes M."/>
            <person name="Du H."/>
            <person name="Sun H."/>
            <person name="Edwards J."/>
            <person name="Bradshaw-Cordum H."/>
            <person name="Ali J."/>
            <person name="Andrews S."/>
            <person name="Isak A."/>
            <person name="Vanbrunt A."/>
            <person name="Nguyen C."/>
            <person name="Du F."/>
            <person name="Lamar B."/>
            <person name="Courtney L."/>
            <person name="Kalicki J."/>
            <person name="Ozersky P."/>
            <person name="Bielicki L."/>
            <person name="Scott K."/>
            <person name="Holmes A."/>
            <person name="Harkins R."/>
            <person name="Harris A."/>
            <person name="Strong C.M."/>
            <person name="Hou S."/>
            <person name="Tomlinson C."/>
            <person name="Dauphin-Kohlberg S."/>
            <person name="Kozlowicz-Reilly A."/>
            <person name="Leonard S."/>
            <person name="Rohlfing T."/>
            <person name="Rock S.M."/>
            <person name="Tin-Wollam A.-M."/>
            <person name="Abbott A."/>
            <person name="Minx P."/>
            <person name="Maupin R."/>
            <person name="Strowmatt C."/>
            <person name="Latreille P."/>
            <person name="Miller N."/>
            <person name="Johnson D."/>
            <person name="Murray J."/>
            <person name="Woessner J.P."/>
            <person name="Wendl M.C."/>
            <person name="Yang S.-P."/>
            <person name="Schultz B.R."/>
            <person name="Wallis J.W."/>
            <person name="Spieth J."/>
            <person name="Bieri T.A."/>
            <person name="Nelson J.O."/>
            <person name="Berkowicz N."/>
            <person name="Wohldmann P.E."/>
            <person name="Cook L.L."/>
            <person name="Hickenbotham M.T."/>
            <person name="Eldred J."/>
            <person name="Williams D."/>
            <person name="Bedell J.A."/>
            <person name="Mardis E.R."/>
            <person name="Clifton S.W."/>
            <person name="Chissoe S.L."/>
            <person name="Marra M.A."/>
            <person name="Raymond C."/>
            <person name="Haugen E."/>
            <person name="Gillett W."/>
            <person name="Zhou Y."/>
            <person name="James R."/>
            <person name="Phelps K."/>
            <person name="Iadanoto S."/>
            <person name="Bubb K."/>
            <person name="Simms E."/>
            <person name="Levy R."/>
            <person name="Clendenning J."/>
            <person name="Kaul R."/>
            <person name="Kent W.J."/>
            <person name="Furey T.S."/>
            <person name="Baertsch R.A."/>
            <person name="Brent M.R."/>
            <person name="Keibler E."/>
            <person name="Flicek P."/>
            <person name="Bork P."/>
            <person name="Suyama M."/>
            <person name="Bailey J.A."/>
            <person name="Portnoy M.E."/>
            <person name="Torrents D."/>
            <person name="Chinwalla A.T."/>
            <person name="Gish W.R."/>
            <person name="Eddy S.R."/>
            <person name="McPherson J.D."/>
            <person name="Olson M.V."/>
            <person name="Eichler E.E."/>
            <person name="Green E.D."/>
            <person name="Waterston R.H."/>
            <person name="Wilson R.K."/>
        </authorList>
    </citation>
    <scope>NUCLEOTIDE SEQUENCE [LARGE SCALE GENOMIC DNA]</scope>
</reference>
<reference key="7">
    <citation type="submission" date="2005-07" db="EMBL/GenBank/DDBJ databases">
        <authorList>
            <person name="Mural R.J."/>
            <person name="Istrail S."/>
            <person name="Sutton G.G."/>
            <person name="Florea L."/>
            <person name="Halpern A.L."/>
            <person name="Mobarry C.M."/>
            <person name="Lippert R."/>
            <person name="Walenz B."/>
            <person name="Shatkay H."/>
            <person name="Dew I."/>
            <person name="Miller J.R."/>
            <person name="Flanigan M.J."/>
            <person name="Edwards N.J."/>
            <person name="Bolanos R."/>
            <person name="Fasulo D."/>
            <person name="Halldorsson B.V."/>
            <person name="Hannenhalli S."/>
            <person name="Turner R."/>
            <person name="Yooseph S."/>
            <person name="Lu F."/>
            <person name="Nusskern D.R."/>
            <person name="Shue B.C."/>
            <person name="Zheng X.H."/>
            <person name="Zhong F."/>
            <person name="Delcher A.L."/>
            <person name="Huson D.H."/>
            <person name="Kravitz S.A."/>
            <person name="Mouchard L."/>
            <person name="Reinert K."/>
            <person name="Remington K.A."/>
            <person name="Clark A.G."/>
            <person name="Waterman M.S."/>
            <person name="Eichler E.E."/>
            <person name="Adams M.D."/>
            <person name="Hunkapiller M.W."/>
            <person name="Myers E.W."/>
            <person name="Venter J.C."/>
        </authorList>
    </citation>
    <scope>NUCLEOTIDE SEQUENCE [LARGE SCALE GENOMIC DNA]</scope>
</reference>
<reference key="8">
    <citation type="submission" date="1997-03" db="EMBL/GenBank/DDBJ databases">
        <authorList>
            <person name="Cho M."/>
            <person name="Kim M.H."/>
            <person name="Hwang C.Y."/>
            <person name="Min W."/>
        </authorList>
    </citation>
    <scope>NUCLEOTIDE SEQUENCE [GENOMIC DNA] OF 1-91</scope>
    <scope>VARIANT THR-18</scope>
</reference>
<reference key="9">
    <citation type="journal article" date="1989" name="Genome">
        <title>Organization of human class I homeobox genes.</title>
        <authorList>
            <person name="Boncinelli E."/>
            <person name="Acampora D."/>
            <person name="Pannese M."/>
            <person name="D'Esposito M."/>
            <person name="Somma R."/>
            <person name="Gaudino G."/>
            <person name="Stornaiuolo A."/>
            <person name="Cafiero M."/>
            <person name="Faiella A."/>
            <person name="Simeone A."/>
        </authorList>
    </citation>
    <scope>NUCLEOTIDE SEQUENCE [GENOMIC DNA] OF 130-195</scope>
</reference>
<sequence>MSSSYYVNALFSKYTAGASLFQNAEPTSCSFAPNSQRSGYGAGAGAFASTVPGLYNVNSPLYQSPFASGYGLGADAYGNLPCASYDQNIPGLCSDLAKGACDKTDEGALHGAAEANFRIYPWMRSSGPDRKRGRQTYTRYQTLELEKEFHFNRYLTRRRRIEIAHALCLTERQIKIWFQNRRMKWKKEHKDEGPTAAAAPEGAVPSAAATAAADKADEEDDDEEEEDEEE</sequence>
<evidence type="ECO:0000255" key="1">
    <source>
        <dbReference type="PROSITE-ProRule" id="PRU00108"/>
    </source>
</evidence>
<evidence type="ECO:0000256" key="2">
    <source>
        <dbReference type="SAM" id="MobiDB-lite"/>
    </source>
</evidence>
<evidence type="ECO:0000269" key="3">
    <source>
    </source>
</evidence>
<evidence type="ECO:0000269" key="4">
    <source>
    </source>
</evidence>
<evidence type="ECO:0000269" key="5">
    <source>
    </source>
</evidence>
<evidence type="ECO:0000269" key="6">
    <source ref="4"/>
</evidence>
<evidence type="ECO:0000269" key="7">
    <source ref="8"/>
</evidence>
<evidence type="ECO:0000305" key="8"/>
<protein>
    <recommendedName>
        <fullName>Homeobox protein Hox-A7</fullName>
    </recommendedName>
    <alternativeName>
        <fullName>Homeobox protein Hox 1.1</fullName>
    </alternativeName>
    <alternativeName>
        <fullName>Homeobox protein Hox-1A</fullName>
    </alternativeName>
</protein>
<feature type="chain" id="PRO_0000200071" description="Homeobox protein Hox-A7">
    <location>
        <begin position="1"/>
        <end position="230"/>
    </location>
</feature>
<feature type="DNA-binding region" description="Homeobox" evidence="1">
    <location>
        <begin position="130"/>
        <end position="189"/>
    </location>
</feature>
<feature type="region of interest" description="Disordered" evidence="2">
    <location>
        <begin position="187"/>
        <end position="230"/>
    </location>
</feature>
<feature type="short sequence motif" description="Antp-type hexapeptide">
    <location>
        <begin position="119"/>
        <end position="124"/>
    </location>
</feature>
<feature type="compositionally biased region" description="Low complexity" evidence="2">
    <location>
        <begin position="194"/>
        <end position="213"/>
    </location>
</feature>
<feature type="compositionally biased region" description="Acidic residues" evidence="2">
    <location>
        <begin position="216"/>
        <end position="230"/>
    </location>
</feature>
<feature type="sequence variant" id="VAR_028001" description="In dbSNP:rs2301721." evidence="3 4 5 6 7">
    <original>A</original>
    <variation>T</variation>
    <location>
        <position position="18"/>
    </location>
</feature>
<feature type="sequence conflict" description="In Ref. 8; AAD00727." evidence="8" ref="8">
    <original>DA</original>
    <variation>RR</variation>
    <location>
        <begin position="75"/>
        <end position="76"/>
    </location>
</feature>
<feature type="sequence conflict" description="In Ref. 4; CAA59270." evidence="8" ref="4">
    <location>
        <position position="78"/>
    </location>
</feature>
<feature type="sequence conflict" description="In Ref. 3; AAD01939." evidence="8" ref="3">
    <original>I</original>
    <variation>V</variation>
    <location>
        <position position="174"/>
    </location>
</feature>
<feature type="sequence conflict" description="In Ref. 4; CAA59270." evidence="8" ref="4">
    <original>PT</original>
    <variation>RL</variation>
    <location>
        <begin position="194"/>
        <end position="195"/>
    </location>
</feature>
<feature type="sequence conflict" description="In Ref. 9; no nucleotide entry." evidence="8" ref="9">
    <original>T</original>
    <variation>I</variation>
    <location>
        <position position="195"/>
    </location>
</feature>
<feature type="sequence conflict" description="In Ref. 4; CAA59270." evidence="8" ref="4">
    <original>D</original>
    <variation>Y</variation>
    <location>
        <position position="222"/>
    </location>
</feature>
<proteinExistence type="evidence at protein level"/>
<organism>
    <name type="scientific">Homo sapiens</name>
    <name type="common">Human</name>
    <dbReference type="NCBI Taxonomy" id="9606"/>
    <lineage>
        <taxon>Eukaryota</taxon>
        <taxon>Metazoa</taxon>
        <taxon>Chordata</taxon>
        <taxon>Craniata</taxon>
        <taxon>Vertebrata</taxon>
        <taxon>Euteleostomi</taxon>
        <taxon>Mammalia</taxon>
        <taxon>Eutheria</taxon>
        <taxon>Euarchontoglires</taxon>
        <taxon>Primates</taxon>
        <taxon>Haplorrhini</taxon>
        <taxon>Catarrhini</taxon>
        <taxon>Hominidae</taxon>
        <taxon>Homo</taxon>
    </lineage>
</organism>
<keyword id="KW-0217">Developmental protein</keyword>
<keyword id="KW-0238">DNA-binding</keyword>
<keyword id="KW-0371">Homeobox</keyword>
<keyword id="KW-0539">Nucleus</keyword>
<keyword id="KW-1267">Proteomics identification</keyword>
<keyword id="KW-1185">Reference proteome</keyword>
<keyword id="KW-0804">Transcription</keyword>
<keyword id="KW-0805">Transcription regulation</keyword>